<protein>
    <recommendedName>
        <fullName evidence="1">Ornithine cyclodeaminase</fullName>
        <shortName evidence="1">OCD</shortName>
        <ecNumber evidence="1">4.3.1.12</ecNumber>
    </recommendedName>
    <alternativeName>
        <fullName evidence="1">Archaeal ornithine cyclodeaminase</fullName>
    </alternativeName>
</protein>
<comment type="function">
    <text evidence="1">Catalyzes the conversion of ornithine to proline, with the release of ammonia.</text>
</comment>
<comment type="catalytic activity">
    <reaction evidence="1">
        <text>L-ornithine = L-proline + NH4(+)</text>
        <dbReference type="Rhea" id="RHEA:24368"/>
        <dbReference type="ChEBI" id="CHEBI:28938"/>
        <dbReference type="ChEBI" id="CHEBI:46911"/>
        <dbReference type="ChEBI" id="CHEBI:60039"/>
        <dbReference type="EC" id="4.3.1.12"/>
    </reaction>
</comment>
<comment type="cofactor">
    <cofactor evidence="2">
        <name>NAD(+)</name>
        <dbReference type="ChEBI" id="CHEBI:57540"/>
    </cofactor>
</comment>
<comment type="similarity">
    <text evidence="3">Belongs to the AgrE/ArgZ ornithine cyclodeaminase family.</text>
</comment>
<gene>
    <name type="ordered locus">MJ1480</name>
</gene>
<feature type="chain" id="PRO_0000107363" description="Ornithine cyclodeaminase">
    <location>
        <begin position="1"/>
        <end position="423"/>
    </location>
</feature>
<feature type="binding site" evidence="2">
    <location>
        <position position="241"/>
    </location>
    <ligand>
        <name>NAD(+)</name>
        <dbReference type="ChEBI" id="CHEBI:57540"/>
    </ligand>
</feature>
<feature type="binding site" evidence="2">
    <location>
        <position position="242"/>
    </location>
    <ligand>
        <name>NAD(+)</name>
        <dbReference type="ChEBI" id="CHEBI:57540"/>
    </ligand>
</feature>
<feature type="binding site" evidence="2">
    <location>
        <position position="320"/>
    </location>
    <ligand>
        <name>NAD(+)</name>
        <dbReference type="ChEBI" id="CHEBI:57540"/>
    </ligand>
</feature>
<feature type="binding site" evidence="2">
    <location>
        <position position="352"/>
    </location>
    <ligand>
        <name>NAD(+)</name>
        <dbReference type="ChEBI" id="CHEBI:57540"/>
    </ligand>
</feature>
<feature type="binding site" evidence="2">
    <location>
        <position position="353"/>
    </location>
    <ligand>
        <name>NAD(+)</name>
        <dbReference type="ChEBI" id="CHEBI:57540"/>
    </ligand>
</feature>
<feature type="binding site" evidence="2">
    <location>
        <position position="354"/>
    </location>
    <ligand>
        <name>NAD(+)</name>
        <dbReference type="ChEBI" id="CHEBI:57540"/>
    </ligand>
</feature>
<feature type="binding site" evidence="2">
    <location>
        <position position="355"/>
    </location>
    <ligand>
        <name>NAD(+)</name>
        <dbReference type="ChEBI" id="CHEBI:57540"/>
    </ligand>
</feature>
<feature type="binding site" evidence="2">
    <location>
        <position position="373"/>
    </location>
    <ligand>
        <name>NAD(+)</name>
        <dbReference type="ChEBI" id="CHEBI:57540"/>
    </ligand>
</feature>
<feature type="binding site" evidence="2">
    <location>
        <position position="396"/>
    </location>
    <ligand>
        <name>NAD(+)</name>
        <dbReference type="ChEBI" id="CHEBI:57540"/>
    </ligand>
</feature>
<feature type="binding site" evidence="2">
    <location>
        <position position="397"/>
    </location>
    <ligand>
        <name>NAD(+)</name>
        <dbReference type="ChEBI" id="CHEBI:57540"/>
    </ligand>
</feature>
<feature type="strand" evidence="5">
    <location>
        <begin position="2"/>
        <end position="10"/>
    </location>
</feature>
<feature type="helix" evidence="5">
    <location>
        <begin position="17"/>
        <end position="27"/>
    </location>
</feature>
<feature type="strand" evidence="5">
    <location>
        <begin position="31"/>
        <end position="38"/>
    </location>
</feature>
<feature type="strand" evidence="5">
    <location>
        <begin position="47"/>
        <end position="57"/>
    </location>
</feature>
<feature type="helix" evidence="5">
    <location>
        <begin position="58"/>
        <end position="74"/>
    </location>
</feature>
<feature type="strand" evidence="5">
    <location>
        <begin position="78"/>
        <end position="83"/>
    </location>
</feature>
<feature type="strand" evidence="5">
    <location>
        <begin position="86"/>
        <end position="88"/>
    </location>
</feature>
<accession>Q58875</accession>
<proteinExistence type="evidence at protein level"/>
<evidence type="ECO:0000250" key="1">
    <source>
        <dbReference type="UniProtKB" id="Q6LXX7"/>
    </source>
</evidence>
<evidence type="ECO:0000250" key="2">
    <source>
        <dbReference type="UniProtKB" id="Q8YMD9"/>
    </source>
</evidence>
<evidence type="ECO:0000305" key="3"/>
<evidence type="ECO:0007744" key="4">
    <source>
        <dbReference type="PDB" id="3MGJ"/>
    </source>
</evidence>
<evidence type="ECO:0007829" key="5">
    <source>
        <dbReference type="PDB" id="3MGJ"/>
    </source>
</evidence>
<organism>
    <name type="scientific">Methanocaldococcus jannaschii (strain ATCC 43067 / DSM 2661 / JAL-1 / JCM 10045 / NBRC 100440)</name>
    <name type="common">Methanococcus jannaschii</name>
    <dbReference type="NCBI Taxonomy" id="243232"/>
    <lineage>
        <taxon>Archaea</taxon>
        <taxon>Methanobacteriati</taxon>
        <taxon>Methanobacteriota</taxon>
        <taxon>Methanomada group</taxon>
        <taxon>Methanococci</taxon>
        <taxon>Methanococcales</taxon>
        <taxon>Methanocaldococcaceae</taxon>
        <taxon>Methanocaldococcus</taxon>
    </lineage>
</organism>
<name>AOCD_METJA</name>
<keyword id="KW-0002">3D-structure</keyword>
<keyword id="KW-0456">Lyase</keyword>
<keyword id="KW-0520">NAD</keyword>
<keyword id="KW-0547">Nucleotide-binding</keyword>
<keyword id="KW-1185">Reference proteome</keyword>
<sequence length="423" mass="47181">MFMREIELRGHIIDSLILPKVFDKILDMGGDYKVLEFEIGKRKTDPSYAKILVIGRDERHVDEILNELRDLGAEIPEIEEVELQPAEKDMVLPEGFYSTTNHKTFIRFKGKWIEVENQKMDGAIVVYPDEMRAEVKTIRNIKKGDLVVVGHKGVRVIPPEKPREGGGLFEFMKSDASSEKPKETIIRRIAKEMYEIREKYRKTGKGGIVVVGGPAIIHTGAGWALAKLIRMGYVQALFAGNALATHDIESVLYGTSLGVDLKTGKSVPGGHSHHLRAINTIMRAGSIKDAVEQGILKEGVMYECIKNNIPYVLAGSIRDDGPLPDVITDVVKAQEKMRELLKGKDMVLMLSTMLHSIATGNLLPSWVKTICVDINPAVVTKLMDRGTSQALGIVTDVGVFLPMLVEELEKLEKEKEKSEKREE</sequence>
<dbReference type="EC" id="4.3.1.12" evidence="1"/>
<dbReference type="EMBL" id="L77117">
    <property type="protein sequence ID" value="AAB99492.1"/>
    <property type="molecule type" value="Genomic_DNA"/>
</dbReference>
<dbReference type="PIR" id="G64484">
    <property type="entry name" value="G64484"/>
</dbReference>
<dbReference type="RefSeq" id="WP_010871002.1">
    <property type="nucleotide sequence ID" value="NC_000909.1"/>
</dbReference>
<dbReference type="PDB" id="3MGJ">
    <property type="method" value="X-ray"/>
    <property type="resolution" value="2.70 A"/>
    <property type="chains" value="A/B=1-110"/>
</dbReference>
<dbReference type="PDBsum" id="3MGJ"/>
<dbReference type="SMR" id="Q58875"/>
<dbReference type="STRING" id="243232.MJ_1480"/>
<dbReference type="PaxDb" id="243232-MJ_1480"/>
<dbReference type="DNASU" id="1452386"/>
<dbReference type="EnsemblBacteria" id="AAB99492">
    <property type="protein sequence ID" value="AAB99492"/>
    <property type="gene ID" value="MJ_1480"/>
</dbReference>
<dbReference type="GeneID" id="1452386"/>
<dbReference type="KEGG" id="mja:MJ_1480"/>
<dbReference type="eggNOG" id="arCOG04422">
    <property type="taxonomic scope" value="Archaea"/>
</dbReference>
<dbReference type="HOGENOM" id="CLU_056125_0_0_2"/>
<dbReference type="InParanoid" id="Q58875"/>
<dbReference type="OrthoDB" id="64170at2157"/>
<dbReference type="PhylomeDB" id="Q58875"/>
<dbReference type="EvolutionaryTrace" id="Q58875"/>
<dbReference type="Proteomes" id="UP000000805">
    <property type="component" value="Chromosome"/>
</dbReference>
<dbReference type="CDD" id="cd12144">
    <property type="entry name" value="SDH_N_domain"/>
    <property type="match status" value="1"/>
</dbReference>
<dbReference type="Gene3D" id="2.40.420.10">
    <property type="entry name" value="conserved putative lor/sdh protein from methanococcus maripaludis s2 domain"/>
    <property type="match status" value="1"/>
</dbReference>
<dbReference type="Gene3D" id="3.40.50.10690">
    <property type="entry name" value="putative lor/sdh protein like domains"/>
    <property type="match status" value="1"/>
</dbReference>
<dbReference type="InterPro" id="IPR005239">
    <property type="entry name" value="ArgZ/ArgE-like"/>
</dbReference>
<dbReference type="InterPro" id="IPR048964">
    <property type="entry name" value="ArgZ/ArgE-like_C_1st"/>
</dbReference>
<dbReference type="InterPro" id="IPR048963">
    <property type="entry name" value="ArgZ/ArgE-like_C_2nd"/>
</dbReference>
<dbReference type="InterPro" id="IPR029035">
    <property type="entry name" value="DHS-like_NAD/FAD-binding_dom"/>
</dbReference>
<dbReference type="InterPro" id="IPR007545">
    <property type="entry name" value="LOR/SDH_bifunc_enz_cons_dom"/>
</dbReference>
<dbReference type="NCBIfam" id="TIGR00300">
    <property type="entry name" value="TIGR00300 family protein"/>
    <property type="match status" value="1"/>
</dbReference>
<dbReference type="Pfam" id="PF21571">
    <property type="entry name" value="ArgZ-like_C_1st"/>
    <property type="match status" value="1"/>
</dbReference>
<dbReference type="Pfam" id="PF21570">
    <property type="entry name" value="ArgZ-like_C_2nd"/>
    <property type="match status" value="1"/>
</dbReference>
<dbReference type="Pfam" id="PF04455">
    <property type="entry name" value="Saccharop_dh_N"/>
    <property type="match status" value="1"/>
</dbReference>
<dbReference type="SUPFAM" id="SSF52467">
    <property type="entry name" value="DHS-like NAD/FAD-binding domain"/>
    <property type="match status" value="1"/>
</dbReference>
<reference key="1">
    <citation type="journal article" date="1996" name="Science">
        <title>Complete genome sequence of the methanogenic archaeon, Methanococcus jannaschii.</title>
        <authorList>
            <person name="Bult C.J."/>
            <person name="White O."/>
            <person name="Olsen G.J."/>
            <person name="Zhou L."/>
            <person name="Fleischmann R.D."/>
            <person name="Sutton G.G."/>
            <person name="Blake J.A."/>
            <person name="FitzGerald L.M."/>
            <person name="Clayton R.A."/>
            <person name="Gocayne J.D."/>
            <person name="Kerlavage A.R."/>
            <person name="Dougherty B.A."/>
            <person name="Tomb J.-F."/>
            <person name="Adams M.D."/>
            <person name="Reich C.I."/>
            <person name="Overbeek R."/>
            <person name="Kirkness E.F."/>
            <person name="Weinstock K.G."/>
            <person name="Merrick J.M."/>
            <person name="Glodek A."/>
            <person name="Scott J.L."/>
            <person name="Geoghagen N.S.M."/>
            <person name="Weidman J.F."/>
            <person name="Fuhrmann J.L."/>
            <person name="Nguyen D."/>
            <person name="Utterback T.R."/>
            <person name="Kelley J.M."/>
            <person name="Peterson J.D."/>
            <person name="Sadow P.W."/>
            <person name="Hanna M.C."/>
            <person name="Cotton M.D."/>
            <person name="Roberts K.M."/>
            <person name="Hurst M.A."/>
            <person name="Kaine B.P."/>
            <person name="Borodovsky M."/>
            <person name="Klenk H.-P."/>
            <person name="Fraser C.M."/>
            <person name="Smith H.O."/>
            <person name="Woese C.R."/>
            <person name="Venter J.C."/>
        </authorList>
    </citation>
    <scope>NUCLEOTIDE SEQUENCE [LARGE SCALE GENOMIC DNA]</scope>
    <source>
        <strain>ATCC 43067 / DSM 2661 / JAL-1 / JCM 10045 / NBRC 100440</strain>
    </source>
</reference>
<reference evidence="4" key="2">
    <citation type="submission" date="2010-04" db="PDB data bank">
        <title>Crystal structure of the Saccharop_dh_N domain of MJ1480 protein from Methanococcus jannaschii.</title>
        <authorList>
            <person name="Vorobiev S."/>
            <person name="Neely H."/>
            <person name="Seetharaman J."/>
            <person name="Lee D."/>
            <person name="Patel D."/>
            <person name="Xiao R."/>
            <person name="Ciccosanti C."/>
            <person name="Acton T.B."/>
            <person name="Everett J.K."/>
            <person name="Montelione G.T."/>
            <person name="Hunt J.F."/>
            <person name="Tong L."/>
        </authorList>
    </citation>
    <scope>X-RAY CRYSTALLOGRAPHY (2.70 ANGSTROMS) OF 1-110</scope>
</reference>